<accession>Q0SNE1</accession>
<accession>G0IS16</accession>
<comment type="function">
    <text evidence="1">Catalyzes the attachment of glutamate to tRNA(Glu) in a two-step reaction: glutamate is first activated by ATP to form Glu-AMP and then transferred to the acceptor end of tRNA(Glu).</text>
</comment>
<comment type="catalytic activity">
    <reaction evidence="1">
        <text>tRNA(Glu) + L-glutamate + ATP = L-glutamyl-tRNA(Glu) + AMP + diphosphate</text>
        <dbReference type="Rhea" id="RHEA:23540"/>
        <dbReference type="Rhea" id="RHEA-COMP:9663"/>
        <dbReference type="Rhea" id="RHEA-COMP:9680"/>
        <dbReference type="ChEBI" id="CHEBI:29985"/>
        <dbReference type="ChEBI" id="CHEBI:30616"/>
        <dbReference type="ChEBI" id="CHEBI:33019"/>
        <dbReference type="ChEBI" id="CHEBI:78442"/>
        <dbReference type="ChEBI" id="CHEBI:78520"/>
        <dbReference type="ChEBI" id="CHEBI:456215"/>
        <dbReference type="EC" id="6.1.1.17"/>
    </reaction>
</comment>
<comment type="subunit">
    <text evidence="1">Monomer.</text>
</comment>
<comment type="subcellular location">
    <subcellularLocation>
        <location evidence="1">Cytoplasm</location>
    </subcellularLocation>
</comment>
<comment type="similarity">
    <text evidence="1">Belongs to the class-I aminoacyl-tRNA synthetase family. Glutamate--tRNA ligase type 1 subfamily.</text>
</comment>
<sequence>MGIRVRYAPSPTGLQHIGGIRTALFNYFFAKSCGGKFLLRIEDTDQSRYFSEAENDLYSSLKWLGISFDEGPVVGGDYAPYVQSQRSAIYKRYAEYLIESGHAYYCYCSPERLERIKKIQNINKMPPGYDRHCRNLSDEEIENVLIKKIKPVVRFKIPLEGDTSFDDVLLGKITWSNKDISPDPVILKSDGLPTYHLANVVDDYLMKITHVLRAQEWVSSGPLHTLLYKAFKWNPPIYCHLPMVMGNDGQKLSKRHGSTALRQFIEDGYLPEAIINYITLLGWSYDDKREFFSKSDLEKFFSIEKINKSPAIFDYHKLDFFNSYYIREKKDEDLFNLLLPFFQKKGYVSKPNTLEESQKLKLLVPLIKSRIKKLSDALSMTKFFYEDIKSWNLDEFLGRKKTAKEVCSILELIKPILEGFEKRSLEENDKIFYDFAKNNGFKLGEILLPIRIAVLGSKVSPPLFDSLKLIGKSKVFERNKLAQEFLRINE</sequence>
<evidence type="ECO:0000255" key="1">
    <source>
        <dbReference type="HAMAP-Rule" id="MF_00022"/>
    </source>
</evidence>
<evidence type="ECO:0000305" key="2"/>
<feature type="chain" id="PRO_1000001875" description="Glutamate--tRNA ligase">
    <location>
        <begin position="1"/>
        <end position="490"/>
    </location>
</feature>
<feature type="short sequence motif" description="'HIGH' region" evidence="1">
    <location>
        <begin position="9"/>
        <end position="19"/>
    </location>
</feature>
<feature type="short sequence motif" description="'KMSKS' region" evidence="1">
    <location>
        <begin position="251"/>
        <end position="255"/>
    </location>
</feature>
<feature type="binding site" evidence="1">
    <location>
        <position position="254"/>
    </location>
    <ligand>
        <name>ATP</name>
        <dbReference type="ChEBI" id="CHEBI:30616"/>
    </ligand>
</feature>
<feature type="sequence conflict" description="In Ref. 2; AEL69597." evidence="2" ref="2">
    <original>N</original>
    <variation>I</variation>
    <location>
        <position position="479"/>
    </location>
</feature>
<reference key="1">
    <citation type="journal article" date="2006" name="BMC Genomics">
        <title>Comparative genome analysis: selection pressure on the Borrelia vls cassettes is essential for infectivity.</title>
        <authorList>
            <person name="Gloeckner G."/>
            <person name="Schulte-Spechtel U."/>
            <person name="Schilhabel M."/>
            <person name="Felder M."/>
            <person name="Suehnel J."/>
            <person name="Wilske B."/>
            <person name="Platzer M."/>
        </authorList>
    </citation>
    <scope>NUCLEOTIDE SEQUENCE [LARGE SCALE GENOMIC DNA]</scope>
    <source>
        <strain>PKo</strain>
    </source>
</reference>
<reference key="2">
    <citation type="journal article" date="2011" name="J. Bacteriol.">
        <title>Whole-genome sequences of two Borrelia afzelii and two Borrelia garinii Lyme disease agent isolates.</title>
        <authorList>
            <person name="Casjens S.R."/>
            <person name="Mongodin E.F."/>
            <person name="Qiu W.G."/>
            <person name="Dunn J.J."/>
            <person name="Luft B.J."/>
            <person name="Fraser-Liggett C.M."/>
            <person name="Schutzer S.E."/>
        </authorList>
    </citation>
    <scope>NUCLEOTIDE SEQUENCE [LARGE SCALE GENOMIC DNA]</scope>
    <source>
        <strain>PKo</strain>
    </source>
</reference>
<name>SYE_BORAP</name>
<proteinExistence type="inferred from homology"/>
<dbReference type="EC" id="6.1.1.17" evidence="1"/>
<dbReference type="EMBL" id="CP000395">
    <property type="protein sequence ID" value="ABH01637.1"/>
    <property type="molecule type" value="Genomic_DNA"/>
</dbReference>
<dbReference type="EMBL" id="CP002933">
    <property type="protein sequence ID" value="AEL69597.1"/>
    <property type="molecule type" value="Genomic_DNA"/>
</dbReference>
<dbReference type="RefSeq" id="WP_011600986.1">
    <property type="nucleotide sequence ID" value="NC_008277.1"/>
</dbReference>
<dbReference type="RefSeq" id="WP_014486375.1">
    <property type="nucleotide sequence ID" value="NZ_CP160066.1"/>
</dbReference>
<dbReference type="SMR" id="Q0SNE1"/>
<dbReference type="STRING" id="29518.BLA32_02455"/>
<dbReference type="KEGG" id="baf:BAPKO_0381"/>
<dbReference type="KEGG" id="bafz:BafPKo_0371"/>
<dbReference type="PATRIC" id="fig|390236.22.peg.364"/>
<dbReference type="eggNOG" id="COG0008">
    <property type="taxonomic scope" value="Bacteria"/>
</dbReference>
<dbReference type="HOGENOM" id="CLU_015768_6_3_12"/>
<dbReference type="OrthoDB" id="9807503at2"/>
<dbReference type="Proteomes" id="UP000005216">
    <property type="component" value="Chromosome"/>
</dbReference>
<dbReference type="GO" id="GO:0005829">
    <property type="term" value="C:cytosol"/>
    <property type="evidence" value="ECO:0007669"/>
    <property type="project" value="TreeGrafter"/>
</dbReference>
<dbReference type="GO" id="GO:0005524">
    <property type="term" value="F:ATP binding"/>
    <property type="evidence" value="ECO:0007669"/>
    <property type="project" value="UniProtKB-UniRule"/>
</dbReference>
<dbReference type="GO" id="GO:0004818">
    <property type="term" value="F:glutamate-tRNA ligase activity"/>
    <property type="evidence" value="ECO:0007669"/>
    <property type="project" value="UniProtKB-UniRule"/>
</dbReference>
<dbReference type="GO" id="GO:0000049">
    <property type="term" value="F:tRNA binding"/>
    <property type="evidence" value="ECO:0007669"/>
    <property type="project" value="InterPro"/>
</dbReference>
<dbReference type="GO" id="GO:0008270">
    <property type="term" value="F:zinc ion binding"/>
    <property type="evidence" value="ECO:0007669"/>
    <property type="project" value="InterPro"/>
</dbReference>
<dbReference type="GO" id="GO:0006424">
    <property type="term" value="P:glutamyl-tRNA aminoacylation"/>
    <property type="evidence" value="ECO:0007669"/>
    <property type="project" value="UniProtKB-UniRule"/>
</dbReference>
<dbReference type="CDD" id="cd00808">
    <property type="entry name" value="GluRS_core"/>
    <property type="match status" value="1"/>
</dbReference>
<dbReference type="FunFam" id="3.40.50.620:FF:000045">
    <property type="entry name" value="Glutamate--tRNA ligase, mitochondrial"/>
    <property type="match status" value="1"/>
</dbReference>
<dbReference type="Gene3D" id="1.10.10.350">
    <property type="match status" value="1"/>
</dbReference>
<dbReference type="Gene3D" id="1.10.8.70">
    <property type="entry name" value="Glutamate-tRNA synthetase, class I, anticodon-binding domain 1"/>
    <property type="match status" value="1"/>
</dbReference>
<dbReference type="Gene3D" id="1.10.1160.10">
    <property type="entry name" value="Glutamyl-trna Synthetase, Domain 2"/>
    <property type="match status" value="1"/>
</dbReference>
<dbReference type="Gene3D" id="3.90.800.10">
    <property type="entry name" value="Glutamyl-tRNA Synthetase, Domain 3"/>
    <property type="match status" value="1"/>
</dbReference>
<dbReference type="Gene3D" id="3.40.50.620">
    <property type="entry name" value="HUPs"/>
    <property type="match status" value="1"/>
</dbReference>
<dbReference type="HAMAP" id="MF_00022">
    <property type="entry name" value="Glu_tRNA_synth_type1"/>
    <property type="match status" value="1"/>
</dbReference>
<dbReference type="InterPro" id="IPR045462">
    <property type="entry name" value="aa-tRNA-synth_I_cd-bd"/>
</dbReference>
<dbReference type="InterPro" id="IPR020751">
    <property type="entry name" value="aa-tRNA-synth_I_codon-bd_sub2"/>
</dbReference>
<dbReference type="InterPro" id="IPR008925">
    <property type="entry name" value="aa_tRNA-synth_I_cd-bd_sf"/>
</dbReference>
<dbReference type="InterPro" id="IPR004527">
    <property type="entry name" value="Glu-tRNA-ligase_bac/mito"/>
</dbReference>
<dbReference type="InterPro" id="IPR020752">
    <property type="entry name" value="Glu-tRNA-synth_I_codon-bd_sub1"/>
</dbReference>
<dbReference type="InterPro" id="IPR000924">
    <property type="entry name" value="Glu/Gln-tRNA-synth"/>
</dbReference>
<dbReference type="InterPro" id="IPR020058">
    <property type="entry name" value="Glu/Gln-tRNA-synth_Ib_cat-dom"/>
</dbReference>
<dbReference type="InterPro" id="IPR020061">
    <property type="entry name" value="Glu_tRNA_lig_a-bdl"/>
</dbReference>
<dbReference type="InterPro" id="IPR049940">
    <property type="entry name" value="GluQ/Sye"/>
</dbReference>
<dbReference type="InterPro" id="IPR033910">
    <property type="entry name" value="GluRS_core"/>
</dbReference>
<dbReference type="InterPro" id="IPR014729">
    <property type="entry name" value="Rossmann-like_a/b/a_fold"/>
</dbReference>
<dbReference type="NCBIfam" id="TIGR00464">
    <property type="entry name" value="gltX_bact"/>
    <property type="match status" value="1"/>
</dbReference>
<dbReference type="PANTHER" id="PTHR43311">
    <property type="entry name" value="GLUTAMATE--TRNA LIGASE"/>
    <property type="match status" value="1"/>
</dbReference>
<dbReference type="PANTHER" id="PTHR43311:SF2">
    <property type="entry name" value="GLUTAMATE--TRNA LIGASE, MITOCHONDRIAL-RELATED"/>
    <property type="match status" value="1"/>
</dbReference>
<dbReference type="Pfam" id="PF19269">
    <property type="entry name" value="Anticodon_2"/>
    <property type="match status" value="1"/>
</dbReference>
<dbReference type="Pfam" id="PF00749">
    <property type="entry name" value="tRNA-synt_1c"/>
    <property type="match status" value="1"/>
</dbReference>
<dbReference type="PRINTS" id="PR00987">
    <property type="entry name" value="TRNASYNTHGLU"/>
</dbReference>
<dbReference type="SUPFAM" id="SSF48163">
    <property type="entry name" value="An anticodon-binding domain of class I aminoacyl-tRNA synthetases"/>
    <property type="match status" value="1"/>
</dbReference>
<dbReference type="SUPFAM" id="SSF52374">
    <property type="entry name" value="Nucleotidylyl transferase"/>
    <property type="match status" value="1"/>
</dbReference>
<keyword id="KW-0030">Aminoacyl-tRNA synthetase</keyword>
<keyword id="KW-0067">ATP-binding</keyword>
<keyword id="KW-0963">Cytoplasm</keyword>
<keyword id="KW-0436">Ligase</keyword>
<keyword id="KW-0547">Nucleotide-binding</keyword>
<keyword id="KW-0648">Protein biosynthesis</keyword>
<protein>
    <recommendedName>
        <fullName evidence="1">Glutamate--tRNA ligase</fullName>
        <ecNumber evidence="1">6.1.1.17</ecNumber>
    </recommendedName>
    <alternativeName>
        <fullName evidence="1">Glutamyl-tRNA synthetase</fullName>
        <shortName evidence="1">GluRS</shortName>
    </alternativeName>
</protein>
<organism>
    <name type="scientific">Borreliella afzelii (strain PKo)</name>
    <name type="common">Borrelia afzelii</name>
    <dbReference type="NCBI Taxonomy" id="390236"/>
    <lineage>
        <taxon>Bacteria</taxon>
        <taxon>Pseudomonadati</taxon>
        <taxon>Spirochaetota</taxon>
        <taxon>Spirochaetia</taxon>
        <taxon>Spirochaetales</taxon>
        <taxon>Borreliaceae</taxon>
        <taxon>Borreliella</taxon>
    </lineage>
</organism>
<gene>
    <name evidence="1" type="primary">gltX</name>
    <name type="ordered locus">BAPKO_0381</name>
    <name type="ordered locus">BafPKo_0371</name>
</gene>